<comment type="function">
    <text evidence="1">Involved in the biosynthesis of branched-chain amino acids (BCAA). Catalyzes an alkyl-migration followed by a ketol-acid reduction of (S)-2-acetolactate (S2AL) to yield (R)-2,3-dihydroxy-isovalerate. In the isomerase reaction, S2AL is rearranged via a Mg-dependent methyl migration to produce 3-hydroxy-3-methyl-2-ketobutyrate (HMKB). In the reductase reaction, this 2-ketoacid undergoes a metal-dependent reduction by NADPH to yield (R)-2,3-dihydroxy-isovalerate.</text>
</comment>
<comment type="catalytic activity">
    <reaction evidence="1">
        <text>(2R)-2,3-dihydroxy-3-methylbutanoate + NADP(+) = (2S)-2-acetolactate + NADPH + H(+)</text>
        <dbReference type="Rhea" id="RHEA:22068"/>
        <dbReference type="ChEBI" id="CHEBI:15378"/>
        <dbReference type="ChEBI" id="CHEBI:49072"/>
        <dbReference type="ChEBI" id="CHEBI:57783"/>
        <dbReference type="ChEBI" id="CHEBI:58349"/>
        <dbReference type="ChEBI" id="CHEBI:58476"/>
        <dbReference type="EC" id="1.1.1.86"/>
    </reaction>
</comment>
<comment type="catalytic activity">
    <reaction evidence="1">
        <text>(2R,3R)-2,3-dihydroxy-3-methylpentanoate + NADP(+) = (S)-2-ethyl-2-hydroxy-3-oxobutanoate + NADPH + H(+)</text>
        <dbReference type="Rhea" id="RHEA:13493"/>
        <dbReference type="ChEBI" id="CHEBI:15378"/>
        <dbReference type="ChEBI" id="CHEBI:49256"/>
        <dbReference type="ChEBI" id="CHEBI:49258"/>
        <dbReference type="ChEBI" id="CHEBI:57783"/>
        <dbReference type="ChEBI" id="CHEBI:58349"/>
        <dbReference type="EC" id="1.1.1.86"/>
    </reaction>
</comment>
<comment type="cofactor">
    <cofactor evidence="1">
        <name>Mg(2+)</name>
        <dbReference type="ChEBI" id="CHEBI:18420"/>
    </cofactor>
    <text evidence="1">Binds 2 magnesium ions per subunit.</text>
</comment>
<comment type="pathway">
    <text evidence="1">Amino-acid biosynthesis; L-isoleucine biosynthesis; L-isoleucine from 2-oxobutanoate: step 2/4.</text>
</comment>
<comment type="pathway">
    <text evidence="1">Amino-acid biosynthesis; L-valine biosynthesis; L-valine from pyruvate: step 2/4.</text>
</comment>
<comment type="similarity">
    <text evidence="1">Belongs to the ketol-acid reductoisomerase family.</text>
</comment>
<organism>
    <name type="scientific">Bacillus cereus (strain ATCC 10987 / NRS 248)</name>
    <dbReference type="NCBI Taxonomy" id="222523"/>
    <lineage>
        <taxon>Bacteria</taxon>
        <taxon>Bacillati</taxon>
        <taxon>Bacillota</taxon>
        <taxon>Bacilli</taxon>
        <taxon>Bacillales</taxon>
        <taxon>Bacillaceae</taxon>
        <taxon>Bacillus</taxon>
        <taxon>Bacillus cereus group</taxon>
    </lineage>
</organism>
<accession>Q73A47</accession>
<evidence type="ECO:0000255" key="1">
    <source>
        <dbReference type="HAMAP-Rule" id="MF_00435"/>
    </source>
</evidence>
<evidence type="ECO:0000255" key="2">
    <source>
        <dbReference type="PROSITE-ProRule" id="PRU01197"/>
    </source>
</evidence>
<evidence type="ECO:0000255" key="3">
    <source>
        <dbReference type="PROSITE-ProRule" id="PRU01198"/>
    </source>
</evidence>
<name>ILVC2_BACC1</name>
<feature type="chain" id="PRO_0000151273" description="Ketol-acid reductoisomerase (NADP(+)) 2">
    <location>
        <begin position="1"/>
        <end position="335"/>
    </location>
</feature>
<feature type="domain" description="KARI N-terminal Rossmann" evidence="2">
    <location>
        <begin position="1"/>
        <end position="180"/>
    </location>
</feature>
<feature type="domain" description="KARI C-terminal knotted" evidence="3">
    <location>
        <begin position="181"/>
        <end position="326"/>
    </location>
</feature>
<feature type="active site" evidence="1">
    <location>
        <position position="106"/>
    </location>
</feature>
<feature type="binding site" evidence="1">
    <location>
        <begin position="24"/>
        <end position="27"/>
    </location>
    <ligand>
        <name>NADP(+)</name>
        <dbReference type="ChEBI" id="CHEBI:58349"/>
    </ligand>
</feature>
<feature type="binding site" evidence="1">
    <location>
        <position position="47"/>
    </location>
    <ligand>
        <name>NADP(+)</name>
        <dbReference type="ChEBI" id="CHEBI:58349"/>
    </ligand>
</feature>
<feature type="binding site" evidence="1">
    <location>
        <position position="51"/>
    </location>
    <ligand>
        <name>NADP(+)</name>
        <dbReference type="ChEBI" id="CHEBI:58349"/>
    </ligand>
</feature>
<feature type="binding site" evidence="1">
    <location>
        <begin position="81"/>
        <end position="84"/>
    </location>
    <ligand>
        <name>NADP(+)</name>
        <dbReference type="ChEBI" id="CHEBI:58349"/>
    </ligand>
</feature>
<feature type="binding site" evidence="1">
    <location>
        <position position="132"/>
    </location>
    <ligand>
        <name>NADP(+)</name>
        <dbReference type="ChEBI" id="CHEBI:58349"/>
    </ligand>
</feature>
<feature type="binding site" evidence="1">
    <location>
        <position position="189"/>
    </location>
    <ligand>
        <name>Mg(2+)</name>
        <dbReference type="ChEBI" id="CHEBI:18420"/>
        <label>1</label>
    </ligand>
</feature>
<feature type="binding site" evidence="1">
    <location>
        <position position="189"/>
    </location>
    <ligand>
        <name>Mg(2+)</name>
        <dbReference type="ChEBI" id="CHEBI:18420"/>
        <label>2</label>
    </ligand>
</feature>
<feature type="binding site" evidence="1">
    <location>
        <position position="193"/>
    </location>
    <ligand>
        <name>Mg(2+)</name>
        <dbReference type="ChEBI" id="CHEBI:18420"/>
        <label>1</label>
    </ligand>
</feature>
<feature type="binding site" evidence="1">
    <location>
        <position position="225"/>
    </location>
    <ligand>
        <name>Mg(2+)</name>
        <dbReference type="ChEBI" id="CHEBI:18420"/>
        <label>2</label>
    </ligand>
</feature>
<feature type="binding site" evidence="1">
    <location>
        <position position="229"/>
    </location>
    <ligand>
        <name>Mg(2+)</name>
        <dbReference type="ChEBI" id="CHEBI:18420"/>
        <label>2</label>
    </ligand>
</feature>
<feature type="binding site" evidence="1">
    <location>
        <position position="250"/>
    </location>
    <ligand>
        <name>substrate</name>
    </ligand>
</feature>
<gene>
    <name evidence="1" type="primary">ilvC2</name>
    <name type="ordered locus">BCE_1936</name>
</gene>
<dbReference type="EC" id="1.1.1.86" evidence="1"/>
<dbReference type="EMBL" id="AE017194">
    <property type="protein sequence ID" value="AAS40860.1"/>
    <property type="molecule type" value="Genomic_DNA"/>
</dbReference>
<dbReference type="SMR" id="Q73A47"/>
<dbReference type="KEGG" id="bca:BCE_1936"/>
<dbReference type="HOGENOM" id="CLU_033821_0_1_9"/>
<dbReference type="UniPathway" id="UPA00047">
    <property type="reaction ID" value="UER00056"/>
</dbReference>
<dbReference type="UniPathway" id="UPA00049">
    <property type="reaction ID" value="UER00060"/>
</dbReference>
<dbReference type="Proteomes" id="UP000002527">
    <property type="component" value="Chromosome"/>
</dbReference>
<dbReference type="GO" id="GO:0005829">
    <property type="term" value="C:cytosol"/>
    <property type="evidence" value="ECO:0007669"/>
    <property type="project" value="TreeGrafter"/>
</dbReference>
<dbReference type="GO" id="GO:0004455">
    <property type="term" value="F:ketol-acid reductoisomerase activity"/>
    <property type="evidence" value="ECO:0007669"/>
    <property type="project" value="UniProtKB-UniRule"/>
</dbReference>
<dbReference type="GO" id="GO:0000287">
    <property type="term" value="F:magnesium ion binding"/>
    <property type="evidence" value="ECO:0007669"/>
    <property type="project" value="UniProtKB-UniRule"/>
</dbReference>
<dbReference type="GO" id="GO:0050661">
    <property type="term" value="F:NADP binding"/>
    <property type="evidence" value="ECO:0007669"/>
    <property type="project" value="InterPro"/>
</dbReference>
<dbReference type="GO" id="GO:0009097">
    <property type="term" value="P:isoleucine biosynthetic process"/>
    <property type="evidence" value="ECO:0007669"/>
    <property type="project" value="UniProtKB-UniRule"/>
</dbReference>
<dbReference type="GO" id="GO:0009099">
    <property type="term" value="P:L-valine biosynthetic process"/>
    <property type="evidence" value="ECO:0007669"/>
    <property type="project" value="UniProtKB-UniRule"/>
</dbReference>
<dbReference type="FunFam" id="3.40.50.720:FF:000023">
    <property type="entry name" value="Ketol-acid reductoisomerase (NADP(+))"/>
    <property type="match status" value="1"/>
</dbReference>
<dbReference type="Gene3D" id="6.10.240.10">
    <property type="match status" value="1"/>
</dbReference>
<dbReference type="Gene3D" id="3.40.50.720">
    <property type="entry name" value="NAD(P)-binding Rossmann-like Domain"/>
    <property type="match status" value="1"/>
</dbReference>
<dbReference type="HAMAP" id="MF_00435">
    <property type="entry name" value="IlvC"/>
    <property type="match status" value="1"/>
</dbReference>
<dbReference type="InterPro" id="IPR008927">
    <property type="entry name" value="6-PGluconate_DH-like_C_sf"/>
</dbReference>
<dbReference type="InterPro" id="IPR013023">
    <property type="entry name" value="KARI"/>
</dbReference>
<dbReference type="InterPro" id="IPR000506">
    <property type="entry name" value="KARI_C"/>
</dbReference>
<dbReference type="InterPro" id="IPR013116">
    <property type="entry name" value="KARI_N"/>
</dbReference>
<dbReference type="InterPro" id="IPR014359">
    <property type="entry name" value="KARI_prok"/>
</dbReference>
<dbReference type="InterPro" id="IPR036291">
    <property type="entry name" value="NAD(P)-bd_dom_sf"/>
</dbReference>
<dbReference type="NCBIfam" id="TIGR00465">
    <property type="entry name" value="ilvC"/>
    <property type="match status" value="1"/>
</dbReference>
<dbReference type="NCBIfam" id="NF004017">
    <property type="entry name" value="PRK05479.1"/>
    <property type="match status" value="1"/>
</dbReference>
<dbReference type="NCBIfam" id="NF009940">
    <property type="entry name" value="PRK13403.1"/>
    <property type="match status" value="1"/>
</dbReference>
<dbReference type="PANTHER" id="PTHR21371">
    <property type="entry name" value="KETOL-ACID REDUCTOISOMERASE, MITOCHONDRIAL"/>
    <property type="match status" value="1"/>
</dbReference>
<dbReference type="PANTHER" id="PTHR21371:SF1">
    <property type="entry name" value="KETOL-ACID REDUCTOISOMERASE, MITOCHONDRIAL"/>
    <property type="match status" value="1"/>
</dbReference>
<dbReference type="Pfam" id="PF01450">
    <property type="entry name" value="KARI_C"/>
    <property type="match status" value="1"/>
</dbReference>
<dbReference type="Pfam" id="PF07991">
    <property type="entry name" value="KARI_N"/>
    <property type="match status" value="1"/>
</dbReference>
<dbReference type="PIRSF" id="PIRSF000116">
    <property type="entry name" value="IlvC_gammaproteo"/>
    <property type="match status" value="1"/>
</dbReference>
<dbReference type="SUPFAM" id="SSF48179">
    <property type="entry name" value="6-phosphogluconate dehydrogenase C-terminal domain-like"/>
    <property type="match status" value="1"/>
</dbReference>
<dbReference type="SUPFAM" id="SSF51735">
    <property type="entry name" value="NAD(P)-binding Rossmann-fold domains"/>
    <property type="match status" value="1"/>
</dbReference>
<dbReference type="PROSITE" id="PS51851">
    <property type="entry name" value="KARI_C"/>
    <property type="match status" value="1"/>
</dbReference>
<dbReference type="PROSITE" id="PS51850">
    <property type="entry name" value="KARI_N"/>
    <property type="match status" value="1"/>
</dbReference>
<reference key="1">
    <citation type="journal article" date="2004" name="Nucleic Acids Res.">
        <title>The genome sequence of Bacillus cereus ATCC 10987 reveals metabolic adaptations and a large plasmid related to Bacillus anthracis pXO1.</title>
        <authorList>
            <person name="Rasko D.A."/>
            <person name="Ravel J."/>
            <person name="Oekstad O.A."/>
            <person name="Helgason E."/>
            <person name="Cer R.Z."/>
            <person name="Jiang L."/>
            <person name="Shores K.A."/>
            <person name="Fouts D.E."/>
            <person name="Tourasse N.J."/>
            <person name="Angiuoli S.V."/>
            <person name="Kolonay J.F."/>
            <person name="Nelson W.C."/>
            <person name="Kolstoe A.-B."/>
            <person name="Fraser C.M."/>
            <person name="Read T.D."/>
        </authorList>
    </citation>
    <scope>NUCLEOTIDE SEQUENCE [LARGE SCALE GENOMIC DNA]</scope>
    <source>
        <strain>ATCC 10987 / NRS 248</strain>
    </source>
</reference>
<sequence length="335" mass="36898">MKTYYEKDANVELLKGKTVAVIGYGSQGHAQAQNLRDSGVEVVVGVRPGKSFEVAKTDGFEVMSVSEAVRTAQVVQMLLPDEQQAHVYKAGVEENLREGQMLLFSHGFNIHFGQINPPSYVDVAMVAPKSPGHLVRRVFQEGNGVPALVAVHQDATGTALHVALAYAKGVGCTRAGVIETTFQEETETDLFGEQTVLCGGVTALVKAGFETLTEGGYRPEIAYFECLHELKLIVDLMYEGGLTNMRHSISDTAEFGDYVTGSRIVTDETKKEMKRVLTEIQQGEFAKKWILENQAGRPTYNAMKKAEQNHQLEKVGAELREMMSWIDAPKELVKK</sequence>
<proteinExistence type="inferred from homology"/>
<keyword id="KW-0028">Amino-acid biosynthesis</keyword>
<keyword id="KW-0100">Branched-chain amino acid biosynthesis</keyword>
<keyword id="KW-0460">Magnesium</keyword>
<keyword id="KW-0479">Metal-binding</keyword>
<keyword id="KW-0521">NADP</keyword>
<keyword id="KW-0560">Oxidoreductase</keyword>
<protein>
    <recommendedName>
        <fullName evidence="1">Ketol-acid reductoisomerase (NADP(+)) 2</fullName>
        <shortName evidence="1">KARI 2</shortName>
        <ecNumber evidence="1">1.1.1.86</ecNumber>
    </recommendedName>
    <alternativeName>
        <fullName evidence="1">Acetohydroxy-acid isomeroreductase 2</fullName>
        <shortName evidence="1">AHIR 2</shortName>
    </alternativeName>
    <alternativeName>
        <fullName evidence="1">Alpha-keto-beta-hydroxylacyl reductoisomerase 2</fullName>
    </alternativeName>
    <alternativeName>
        <fullName evidence="1">Ketol-acid reductoisomerase type 1</fullName>
    </alternativeName>
    <alternativeName>
        <fullName evidence="1">Ketol-acid reductoisomerase type I</fullName>
    </alternativeName>
</protein>